<protein>
    <recommendedName>
        <fullName>Putative tyrosine-protein phosphatase OCA1</fullName>
        <ecNumber>3.1.3.48</ecNumber>
    </recommendedName>
    <alternativeName>
        <fullName>Oxidant-induced cell-cycle arrest protein 1</fullName>
    </alternativeName>
</protein>
<gene>
    <name type="primary">OCA1</name>
    <name type="ORF">SCY_4692</name>
</gene>
<sequence>MTSKVGEYEDVPEDESRLTEENVSVPEEEVEDEDEEEDDDDDHIYINEETESGREKVLVSHAPQERIVPPLNFCPVERYLYRSGQPSPVNFPFLLNLKLKTIIWLSNEEPQDTLLEFCDTHRINLQFAAINPDAGEDDNPWDGLTEHSIINVLQTIVTQENYPLLVCCGMGRHRTGTVIGCLRRIMGWNLASVSEEYRRFTGSRGGRILVELLIEAFDTNLVKIDKNKAPSWLLTALE</sequence>
<proteinExistence type="inferred from homology"/>
<feature type="initiator methionine" description="Removed" evidence="2">
    <location>
        <position position="1"/>
    </location>
</feature>
<feature type="chain" id="PRO_0000333397" description="Putative tyrosine-protein phosphatase OCA1">
    <location>
        <begin position="2"/>
        <end position="238"/>
    </location>
</feature>
<feature type="domain" description="Tyrosine-protein phosphatase" evidence="3">
    <location>
        <begin position="72"/>
        <end position="230"/>
    </location>
</feature>
<feature type="region of interest" description="Disordered" evidence="4">
    <location>
        <begin position="1"/>
        <end position="43"/>
    </location>
</feature>
<feature type="compositionally biased region" description="Acidic residues" evidence="4">
    <location>
        <begin position="26"/>
        <end position="42"/>
    </location>
</feature>
<feature type="active site" description="Phosphocysteine intermediate" evidence="3">
    <location>
        <position position="168"/>
    </location>
</feature>
<feature type="modified residue" description="N-acetylthreonine" evidence="2">
    <location>
        <position position="2"/>
    </location>
</feature>
<feature type="modified residue" description="Phosphoserine" evidence="2">
    <location>
        <position position="24"/>
    </location>
</feature>
<organism>
    <name type="scientific">Saccharomyces cerevisiae (strain YJM789)</name>
    <name type="common">Baker's yeast</name>
    <dbReference type="NCBI Taxonomy" id="307796"/>
    <lineage>
        <taxon>Eukaryota</taxon>
        <taxon>Fungi</taxon>
        <taxon>Dikarya</taxon>
        <taxon>Ascomycota</taxon>
        <taxon>Saccharomycotina</taxon>
        <taxon>Saccharomycetes</taxon>
        <taxon>Saccharomycetales</taxon>
        <taxon>Saccharomycetaceae</taxon>
        <taxon>Saccharomyces</taxon>
    </lineage>
</organism>
<comment type="function">
    <text evidence="1">Putative tyrosine-protein phosphatase required for protection against superoxide stress. Involved in cell-cycle delay in response to linoleic acid hydroperoxide (LoaOOH) (By similarity).</text>
</comment>
<comment type="catalytic activity">
    <reaction>
        <text>O-phospho-L-tyrosyl-[protein] + H2O = L-tyrosyl-[protein] + phosphate</text>
        <dbReference type="Rhea" id="RHEA:10684"/>
        <dbReference type="Rhea" id="RHEA-COMP:10136"/>
        <dbReference type="Rhea" id="RHEA-COMP:20101"/>
        <dbReference type="ChEBI" id="CHEBI:15377"/>
        <dbReference type="ChEBI" id="CHEBI:43474"/>
        <dbReference type="ChEBI" id="CHEBI:46858"/>
        <dbReference type="ChEBI" id="CHEBI:61978"/>
        <dbReference type="EC" id="3.1.3.48"/>
    </reaction>
</comment>
<comment type="subcellular location">
    <subcellularLocation>
        <location evidence="1">Cytoplasm</location>
    </subcellularLocation>
</comment>
<comment type="similarity">
    <text evidence="5">Belongs to the protein-tyrosine phosphatase family.</text>
</comment>
<accession>A6ZRY1</accession>
<name>OCA1_YEAS7</name>
<keyword id="KW-0007">Acetylation</keyword>
<keyword id="KW-0963">Cytoplasm</keyword>
<keyword id="KW-0378">Hydrolase</keyword>
<keyword id="KW-0597">Phosphoprotein</keyword>
<keyword id="KW-0904">Protein phosphatase</keyword>
<keyword id="KW-0346">Stress response</keyword>
<reference key="1">
    <citation type="journal article" date="2007" name="Proc. Natl. Acad. Sci. U.S.A.">
        <title>Genome sequencing and comparative analysis of Saccharomyces cerevisiae strain YJM789.</title>
        <authorList>
            <person name="Wei W."/>
            <person name="McCusker J.H."/>
            <person name="Hyman R.W."/>
            <person name="Jones T."/>
            <person name="Ning Y."/>
            <person name="Cao Z."/>
            <person name="Gu Z."/>
            <person name="Bruno D."/>
            <person name="Miranda M."/>
            <person name="Nguyen M."/>
            <person name="Wilhelmy J."/>
            <person name="Komp C."/>
            <person name="Tamse R."/>
            <person name="Wang X."/>
            <person name="Jia P."/>
            <person name="Luedi P."/>
            <person name="Oefner P.J."/>
            <person name="David L."/>
            <person name="Dietrich F.S."/>
            <person name="Li Y."/>
            <person name="Davis R.W."/>
            <person name="Steinmetz L.M."/>
        </authorList>
    </citation>
    <scope>NUCLEOTIDE SEQUENCE [LARGE SCALE GENOMIC DNA]</scope>
    <source>
        <strain>YJM789</strain>
    </source>
</reference>
<dbReference type="EC" id="3.1.3.48"/>
<dbReference type="EMBL" id="AAFW02000067">
    <property type="protein sequence ID" value="EDN62713.1"/>
    <property type="molecule type" value="Genomic_DNA"/>
</dbReference>
<dbReference type="SMR" id="A6ZRY1"/>
<dbReference type="HOGENOM" id="CLU_047845_2_0_1"/>
<dbReference type="Proteomes" id="UP000007060">
    <property type="component" value="Unassembled WGS sequence"/>
</dbReference>
<dbReference type="GO" id="GO:0005737">
    <property type="term" value="C:cytoplasm"/>
    <property type="evidence" value="ECO:0007669"/>
    <property type="project" value="UniProtKB-SubCell"/>
</dbReference>
<dbReference type="GO" id="GO:0004725">
    <property type="term" value="F:protein tyrosine phosphatase activity"/>
    <property type="evidence" value="ECO:0007669"/>
    <property type="project" value="UniProtKB-EC"/>
</dbReference>
<dbReference type="CDD" id="cd14531">
    <property type="entry name" value="PFA-DSP_Oca1"/>
    <property type="match status" value="1"/>
</dbReference>
<dbReference type="FunFam" id="3.90.190.10:FF:000035">
    <property type="entry name" value="Tyrosine phosphatase, putative"/>
    <property type="match status" value="1"/>
</dbReference>
<dbReference type="Gene3D" id="3.90.190.10">
    <property type="entry name" value="Protein tyrosine phosphatase superfamily"/>
    <property type="match status" value="1"/>
</dbReference>
<dbReference type="InterPro" id="IPR029021">
    <property type="entry name" value="Prot-tyrosine_phosphatase-like"/>
</dbReference>
<dbReference type="InterPro" id="IPR004861">
    <property type="entry name" value="Siw14-like"/>
</dbReference>
<dbReference type="InterPro" id="IPR020422">
    <property type="entry name" value="TYR_PHOSPHATASE_DUAL_dom"/>
</dbReference>
<dbReference type="PANTHER" id="PTHR31126">
    <property type="entry name" value="TYROSINE-PROTEIN PHOSPHATASE"/>
    <property type="match status" value="1"/>
</dbReference>
<dbReference type="PANTHER" id="PTHR31126:SF8">
    <property type="entry name" value="TYROSINE-PROTEIN PHOSPHATASE OCA1-RELATED"/>
    <property type="match status" value="1"/>
</dbReference>
<dbReference type="Pfam" id="PF03162">
    <property type="entry name" value="Y_phosphatase2"/>
    <property type="match status" value="1"/>
</dbReference>
<dbReference type="SUPFAM" id="SSF52799">
    <property type="entry name" value="(Phosphotyrosine protein) phosphatases II"/>
    <property type="match status" value="1"/>
</dbReference>
<dbReference type="PROSITE" id="PS50054">
    <property type="entry name" value="TYR_PHOSPHATASE_DUAL"/>
    <property type="match status" value="1"/>
</dbReference>
<evidence type="ECO:0000250" key="1"/>
<evidence type="ECO:0000250" key="2">
    <source>
        <dbReference type="UniProtKB" id="P50946"/>
    </source>
</evidence>
<evidence type="ECO:0000255" key="3">
    <source>
        <dbReference type="PROSITE-ProRule" id="PRU00160"/>
    </source>
</evidence>
<evidence type="ECO:0000256" key="4">
    <source>
        <dbReference type="SAM" id="MobiDB-lite"/>
    </source>
</evidence>
<evidence type="ECO:0000305" key="5"/>